<feature type="chain" id="PRO_1000122875" description="Sulfurtransferase TusD">
    <location>
        <begin position="1"/>
        <end position="129"/>
    </location>
</feature>
<feature type="active site" description="Cysteine persulfide intermediate" evidence="1">
    <location>
        <position position="79"/>
    </location>
</feature>
<proteinExistence type="inferred from homology"/>
<accession>A8GKK7</accession>
<comment type="function">
    <text evidence="1">Part of a sulfur-relay system required for 2-thiolation of 5-methylaminomethyl-2-thiouridine (mnm(5)s(2)U) at tRNA wobble positions. Accepts sulfur from TusA and transfers it in turn to TusE.</text>
</comment>
<comment type="subunit">
    <text evidence="1">Heterohexamer, formed by a dimer of trimers. The hexameric TusBCD complex contains 2 copies each of TusB, TusC and TusD. The TusBCD complex interacts with TusE.</text>
</comment>
<comment type="subcellular location">
    <subcellularLocation>
        <location evidence="1">Cytoplasm</location>
    </subcellularLocation>
</comment>
<comment type="similarity">
    <text evidence="1">Belongs to the DsrE/TusD family.</text>
</comment>
<reference key="1">
    <citation type="submission" date="2007-09" db="EMBL/GenBank/DDBJ databases">
        <title>Complete sequence of chromosome of Serratia proteamaculans 568.</title>
        <authorList>
            <consortium name="US DOE Joint Genome Institute"/>
            <person name="Copeland A."/>
            <person name="Lucas S."/>
            <person name="Lapidus A."/>
            <person name="Barry K."/>
            <person name="Glavina del Rio T."/>
            <person name="Dalin E."/>
            <person name="Tice H."/>
            <person name="Pitluck S."/>
            <person name="Chain P."/>
            <person name="Malfatti S."/>
            <person name="Shin M."/>
            <person name="Vergez L."/>
            <person name="Schmutz J."/>
            <person name="Larimer F."/>
            <person name="Land M."/>
            <person name="Hauser L."/>
            <person name="Kyrpides N."/>
            <person name="Kim E."/>
            <person name="Taghavi S."/>
            <person name="Newman L."/>
            <person name="Vangronsveld J."/>
            <person name="van der Lelie D."/>
            <person name="Richardson P."/>
        </authorList>
    </citation>
    <scope>NUCLEOTIDE SEQUENCE [LARGE SCALE GENOMIC DNA]</scope>
    <source>
        <strain>568</strain>
    </source>
</reference>
<protein>
    <recommendedName>
        <fullName evidence="1">Sulfurtransferase TusD</fullName>
        <ecNumber evidence="1">2.8.1.-</ecNumber>
    </recommendedName>
    <alternativeName>
        <fullName evidence="1">tRNA 2-thiouridine synthesizing protein D</fullName>
    </alternativeName>
</protein>
<name>TUSD_SERP5</name>
<dbReference type="EC" id="2.8.1.-" evidence="1"/>
<dbReference type="EMBL" id="CP000826">
    <property type="protein sequence ID" value="ABV43647.1"/>
    <property type="molecule type" value="Genomic_DNA"/>
</dbReference>
<dbReference type="SMR" id="A8GKK7"/>
<dbReference type="STRING" id="399741.Spro_4554"/>
<dbReference type="KEGG" id="spe:Spro_4554"/>
<dbReference type="eggNOG" id="COG1553">
    <property type="taxonomic scope" value="Bacteria"/>
</dbReference>
<dbReference type="HOGENOM" id="CLU_132095_0_0_6"/>
<dbReference type="OrthoDB" id="9787483at2"/>
<dbReference type="GO" id="GO:1990228">
    <property type="term" value="C:sulfurtransferase complex"/>
    <property type="evidence" value="ECO:0007669"/>
    <property type="project" value="TreeGrafter"/>
</dbReference>
<dbReference type="GO" id="GO:0097163">
    <property type="term" value="F:sulfur carrier activity"/>
    <property type="evidence" value="ECO:0007669"/>
    <property type="project" value="TreeGrafter"/>
</dbReference>
<dbReference type="GO" id="GO:0016783">
    <property type="term" value="F:sulfurtransferase activity"/>
    <property type="evidence" value="ECO:0007669"/>
    <property type="project" value="UniProtKB-UniRule"/>
</dbReference>
<dbReference type="GO" id="GO:0002143">
    <property type="term" value="P:tRNA wobble position uridine thiolation"/>
    <property type="evidence" value="ECO:0007669"/>
    <property type="project" value="TreeGrafter"/>
</dbReference>
<dbReference type="FunFam" id="3.40.1260.10:FF:000001">
    <property type="entry name" value="Sulfurtransferase TusD"/>
    <property type="match status" value="1"/>
</dbReference>
<dbReference type="Gene3D" id="3.40.1260.10">
    <property type="entry name" value="DsrEFH-like"/>
    <property type="match status" value="1"/>
</dbReference>
<dbReference type="HAMAP" id="MF_00390">
    <property type="entry name" value="Thiourid_synth_D"/>
    <property type="match status" value="1"/>
</dbReference>
<dbReference type="InterPro" id="IPR027396">
    <property type="entry name" value="DsrEFH-like"/>
</dbReference>
<dbReference type="InterPro" id="IPR003787">
    <property type="entry name" value="Sulphur_relay_DsrE/F-like"/>
</dbReference>
<dbReference type="InterPro" id="IPR017463">
    <property type="entry name" value="Sulphur_relay_TusD/DsrE"/>
</dbReference>
<dbReference type="NCBIfam" id="NF001237">
    <property type="entry name" value="PRK00207.1"/>
    <property type="match status" value="1"/>
</dbReference>
<dbReference type="NCBIfam" id="TIGR03012">
    <property type="entry name" value="sulf_tusD_dsrE"/>
    <property type="match status" value="1"/>
</dbReference>
<dbReference type="PANTHER" id="PTHR34874">
    <property type="entry name" value="PROTEIN YCHN"/>
    <property type="match status" value="1"/>
</dbReference>
<dbReference type="PANTHER" id="PTHR34874:SF3">
    <property type="entry name" value="SULFURTRANSFERASE TUSD"/>
    <property type="match status" value="1"/>
</dbReference>
<dbReference type="Pfam" id="PF02635">
    <property type="entry name" value="DsrE"/>
    <property type="match status" value="1"/>
</dbReference>
<dbReference type="SUPFAM" id="SSF75169">
    <property type="entry name" value="DsrEFH-like"/>
    <property type="match status" value="1"/>
</dbReference>
<organism>
    <name type="scientific">Serratia proteamaculans (strain 568)</name>
    <dbReference type="NCBI Taxonomy" id="399741"/>
    <lineage>
        <taxon>Bacteria</taxon>
        <taxon>Pseudomonadati</taxon>
        <taxon>Pseudomonadota</taxon>
        <taxon>Gammaproteobacteria</taxon>
        <taxon>Enterobacterales</taxon>
        <taxon>Yersiniaceae</taxon>
        <taxon>Serratia</taxon>
    </lineage>
</organism>
<evidence type="ECO:0000255" key="1">
    <source>
        <dbReference type="HAMAP-Rule" id="MF_00390"/>
    </source>
</evidence>
<keyword id="KW-0963">Cytoplasm</keyword>
<keyword id="KW-0808">Transferase</keyword>
<keyword id="KW-0819">tRNA processing</keyword>
<gene>
    <name evidence="1" type="primary">tusD</name>
    <name type="ordered locus">Spro_4554</name>
</gene>
<sequence length="129" mass="13768">MLDYCLVVTGPAYGTQQASSAYQFAQALLAKGHRLSSVFFYREGVLNANQLTAPAGDEFDLVRGWVQLARQHGIELNVCVAAALRRGVTDEQEAAQQGLPAANLQPGFILSGLGSLAEAALSSDRLVQF</sequence>